<feature type="chain" id="PRO_1000054760" description="Small ribosomal subunit protein uS15">
    <location>
        <begin position="1"/>
        <end position="89"/>
    </location>
</feature>
<accession>A3MI96</accession>
<keyword id="KW-0687">Ribonucleoprotein</keyword>
<keyword id="KW-0689">Ribosomal protein</keyword>
<keyword id="KW-0694">RNA-binding</keyword>
<keyword id="KW-0699">rRNA-binding</keyword>
<evidence type="ECO:0000255" key="1">
    <source>
        <dbReference type="HAMAP-Rule" id="MF_01343"/>
    </source>
</evidence>
<evidence type="ECO:0000305" key="2"/>
<proteinExistence type="inferred from homology"/>
<gene>
    <name evidence="1" type="primary">rpsO</name>
    <name type="ordered locus">BMA10247_0407</name>
</gene>
<name>RS15_BURM7</name>
<protein>
    <recommendedName>
        <fullName evidence="1">Small ribosomal subunit protein uS15</fullName>
    </recommendedName>
    <alternativeName>
        <fullName evidence="2">30S ribosomal protein S15</fullName>
    </alternativeName>
</protein>
<sequence>MSVADIKKSEVVAQFARGANDTGSPEVQVALLTARITELTGHFKTHAKDHHSRRGLLRMVSRRRKLLDYLKGKDADRYRALIEKLGLRK</sequence>
<reference key="1">
    <citation type="journal article" date="2010" name="Genome Biol. Evol.">
        <title>Continuing evolution of Burkholderia mallei through genome reduction and large-scale rearrangements.</title>
        <authorList>
            <person name="Losada L."/>
            <person name="Ronning C.M."/>
            <person name="DeShazer D."/>
            <person name="Woods D."/>
            <person name="Fedorova N."/>
            <person name="Kim H.S."/>
            <person name="Shabalina S.A."/>
            <person name="Pearson T.R."/>
            <person name="Brinkac L."/>
            <person name="Tan P."/>
            <person name="Nandi T."/>
            <person name="Crabtree J."/>
            <person name="Badger J."/>
            <person name="Beckstrom-Sternberg S."/>
            <person name="Saqib M."/>
            <person name="Schutzer S.E."/>
            <person name="Keim P."/>
            <person name="Nierman W.C."/>
        </authorList>
    </citation>
    <scope>NUCLEOTIDE SEQUENCE [LARGE SCALE GENOMIC DNA]</scope>
    <source>
        <strain>NCTC 10247</strain>
    </source>
</reference>
<organism>
    <name type="scientific">Burkholderia mallei (strain NCTC 10247)</name>
    <dbReference type="NCBI Taxonomy" id="320389"/>
    <lineage>
        <taxon>Bacteria</taxon>
        <taxon>Pseudomonadati</taxon>
        <taxon>Pseudomonadota</taxon>
        <taxon>Betaproteobacteria</taxon>
        <taxon>Burkholderiales</taxon>
        <taxon>Burkholderiaceae</taxon>
        <taxon>Burkholderia</taxon>
        <taxon>pseudomallei group</taxon>
    </lineage>
</organism>
<dbReference type="EMBL" id="CP000548">
    <property type="protein sequence ID" value="ABO06319.1"/>
    <property type="molecule type" value="Genomic_DNA"/>
</dbReference>
<dbReference type="RefSeq" id="WP_004185828.1">
    <property type="nucleotide sequence ID" value="NZ_CP007802.1"/>
</dbReference>
<dbReference type="SMR" id="A3MI96"/>
<dbReference type="GeneID" id="93059688"/>
<dbReference type="KEGG" id="bmaz:BM44_2604"/>
<dbReference type="KEGG" id="bmn:BMA10247_0407"/>
<dbReference type="PATRIC" id="fig|320389.8.peg.2937"/>
<dbReference type="GO" id="GO:0022627">
    <property type="term" value="C:cytosolic small ribosomal subunit"/>
    <property type="evidence" value="ECO:0007669"/>
    <property type="project" value="TreeGrafter"/>
</dbReference>
<dbReference type="GO" id="GO:0019843">
    <property type="term" value="F:rRNA binding"/>
    <property type="evidence" value="ECO:0007669"/>
    <property type="project" value="UniProtKB-UniRule"/>
</dbReference>
<dbReference type="GO" id="GO:0003735">
    <property type="term" value="F:structural constituent of ribosome"/>
    <property type="evidence" value="ECO:0007669"/>
    <property type="project" value="InterPro"/>
</dbReference>
<dbReference type="GO" id="GO:0006412">
    <property type="term" value="P:translation"/>
    <property type="evidence" value="ECO:0007669"/>
    <property type="project" value="UniProtKB-UniRule"/>
</dbReference>
<dbReference type="CDD" id="cd00353">
    <property type="entry name" value="Ribosomal_S15p_S13e"/>
    <property type="match status" value="1"/>
</dbReference>
<dbReference type="FunFam" id="1.10.287.10:FF:000002">
    <property type="entry name" value="30S ribosomal protein S15"/>
    <property type="match status" value="1"/>
</dbReference>
<dbReference type="Gene3D" id="6.10.250.3130">
    <property type="match status" value="1"/>
</dbReference>
<dbReference type="Gene3D" id="1.10.287.10">
    <property type="entry name" value="S15/NS1, RNA-binding"/>
    <property type="match status" value="1"/>
</dbReference>
<dbReference type="HAMAP" id="MF_01343_B">
    <property type="entry name" value="Ribosomal_uS15_B"/>
    <property type="match status" value="1"/>
</dbReference>
<dbReference type="InterPro" id="IPR000589">
    <property type="entry name" value="Ribosomal_uS15"/>
</dbReference>
<dbReference type="InterPro" id="IPR005290">
    <property type="entry name" value="Ribosomal_uS15_bac-type"/>
</dbReference>
<dbReference type="InterPro" id="IPR009068">
    <property type="entry name" value="uS15_NS1_RNA-bd_sf"/>
</dbReference>
<dbReference type="NCBIfam" id="TIGR00952">
    <property type="entry name" value="S15_bact"/>
    <property type="match status" value="1"/>
</dbReference>
<dbReference type="PANTHER" id="PTHR23321">
    <property type="entry name" value="RIBOSOMAL PROTEIN S15, BACTERIAL AND ORGANELLAR"/>
    <property type="match status" value="1"/>
</dbReference>
<dbReference type="PANTHER" id="PTHR23321:SF26">
    <property type="entry name" value="SMALL RIBOSOMAL SUBUNIT PROTEIN US15M"/>
    <property type="match status" value="1"/>
</dbReference>
<dbReference type="Pfam" id="PF00312">
    <property type="entry name" value="Ribosomal_S15"/>
    <property type="match status" value="1"/>
</dbReference>
<dbReference type="SMART" id="SM01387">
    <property type="entry name" value="Ribosomal_S15"/>
    <property type="match status" value="1"/>
</dbReference>
<dbReference type="SUPFAM" id="SSF47060">
    <property type="entry name" value="S15/NS1 RNA-binding domain"/>
    <property type="match status" value="1"/>
</dbReference>
<dbReference type="PROSITE" id="PS00362">
    <property type="entry name" value="RIBOSOMAL_S15"/>
    <property type="match status" value="1"/>
</dbReference>
<comment type="function">
    <text evidence="1">One of the primary rRNA binding proteins, it binds directly to 16S rRNA where it helps nucleate assembly of the platform of the 30S subunit by binding and bridging several RNA helices of the 16S rRNA.</text>
</comment>
<comment type="function">
    <text evidence="1">Forms an intersubunit bridge (bridge B4) with the 23S rRNA of the 50S subunit in the ribosome.</text>
</comment>
<comment type="subunit">
    <text evidence="1">Part of the 30S ribosomal subunit. Forms a bridge to the 50S subunit in the 70S ribosome, contacting the 23S rRNA.</text>
</comment>
<comment type="similarity">
    <text evidence="1">Belongs to the universal ribosomal protein uS15 family.</text>
</comment>